<reference key="1">
    <citation type="submission" date="2006-10" db="EMBL/GenBank/DDBJ databases">
        <title>Complete sequence of chromosome of Pelobacter propionicus DSM 2379.</title>
        <authorList>
            <consortium name="US DOE Joint Genome Institute"/>
            <person name="Copeland A."/>
            <person name="Lucas S."/>
            <person name="Lapidus A."/>
            <person name="Barry K."/>
            <person name="Detter J.C."/>
            <person name="Glavina del Rio T."/>
            <person name="Hammon N."/>
            <person name="Israni S."/>
            <person name="Dalin E."/>
            <person name="Tice H."/>
            <person name="Pitluck S."/>
            <person name="Saunders E."/>
            <person name="Brettin T."/>
            <person name="Bruce D."/>
            <person name="Han C."/>
            <person name="Tapia R."/>
            <person name="Schmutz J."/>
            <person name="Larimer F."/>
            <person name="Land M."/>
            <person name="Hauser L."/>
            <person name="Kyrpides N."/>
            <person name="Kim E."/>
            <person name="Lovley D."/>
            <person name="Richardson P."/>
        </authorList>
    </citation>
    <scope>NUCLEOTIDE SEQUENCE [LARGE SCALE GENOMIC DNA]</scope>
    <source>
        <strain>DSM 2379 / NBRC 103807 / OttBd1</strain>
    </source>
</reference>
<gene>
    <name evidence="2" type="primary">infB</name>
    <name type="ordered locus">Ppro_0963</name>
</gene>
<feature type="chain" id="PRO_1000008295" description="Translation initiation factor IF-2">
    <location>
        <begin position="1"/>
        <end position="921"/>
    </location>
</feature>
<feature type="domain" description="tr-type G">
    <location>
        <begin position="421"/>
        <end position="590"/>
    </location>
</feature>
<feature type="region of interest" description="Disordered" evidence="3">
    <location>
        <begin position="81"/>
        <end position="118"/>
    </location>
</feature>
<feature type="region of interest" description="Disordered" evidence="3">
    <location>
        <begin position="175"/>
        <end position="194"/>
    </location>
</feature>
<feature type="region of interest" description="Disordered" evidence="3">
    <location>
        <begin position="219"/>
        <end position="301"/>
    </location>
</feature>
<feature type="region of interest" description="G1" evidence="1">
    <location>
        <begin position="430"/>
        <end position="437"/>
    </location>
</feature>
<feature type="region of interest" description="G2" evidence="1">
    <location>
        <begin position="455"/>
        <end position="459"/>
    </location>
</feature>
<feature type="region of interest" description="G3" evidence="1">
    <location>
        <begin position="476"/>
        <end position="479"/>
    </location>
</feature>
<feature type="region of interest" description="G4" evidence="1">
    <location>
        <begin position="530"/>
        <end position="533"/>
    </location>
</feature>
<feature type="region of interest" description="G5" evidence="1">
    <location>
        <begin position="566"/>
        <end position="568"/>
    </location>
</feature>
<feature type="compositionally biased region" description="Pro residues" evidence="3">
    <location>
        <begin position="96"/>
        <end position="112"/>
    </location>
</feature>
<feature type="compositionally biased region" description="Low complexity" evidence="3">
    <location>
        <begin position="229"/>
        <end position="241"/>
    </location>
</feature>
<feature type="compositionally biased region" description="Basic and acidic residues" evidence="3">
    <location>
        <begin position="292"/>
        <end position="301"/>
    </location>
</feature>
<feature type="binding site" evidence="2">
    <location>
        <begin position="430"/>
        <end position="437"/>
    </location>
    <ligand>
        <name>GTP</name>
        <dbReference type="ChEBI" id="CHEBI:37565"/>
    </ligand>
</feature>
<feature type="binding site" evidence="2">
    <location>
        <begin position="476"/>
        <end position="480"/>
    </location>
    <ligand>
        <name>GTP</name>
        <dbReference type="ChEBI" id="CHEBI:37565"/>
    </ligand>
</feature>
<feature type="binding site" evidence="2">
    <location>
        <begin position="530"/>
        <end position="533"/>
    </location>
    <ligand>
        <name>GTP</name>
        <dbReference type="ChEBI" id="CHEBI:37565"/>
    </ligand>
</feature>
<organism>
    <name type="scientific">Pelobacter propionicus (strain DSM 2379 / NBRC 103807 / OttBd1)</name>
    <dbReference type="NCBI Taxonomy" id="338966"/>
    <lineage>
        <taxon>Bacteria</taxon>
        <taxon>Pseudomonadati</taxon>
        <taxon>Thermodesulfobacteriota</taxon>
        <taxon>Desulfuromonadia</taxon>
        <taxon>Desulfuromonadales</taxon>
        <taxon>Desulfuromonadaceae</taxon>
        <taxon>Pelobacter</taxon>
    </lineage>
</organism>
<accession>A1AMM1</accession>
<dbReference type="EMBL" id="CP000482">
    <property type="protein sequence ID" value="ABK98591.1"/>
    <property type="molecule type" value="Genomic_DNA"/>
</dbReference>
<dbReference type="RefSeq" id="WP_011734898.1">
    <property type="nucleotide sequence ID" value="NC_008609.1"/>
</dbReference>
<dbReference type="SMR" id="A1AMM1"/>
<dbReference type="STRING" id="338966.Ppro_0963"/>
<dbReference type="KEGG" id="ppd:Ppro_0963"/>
<dbReference type="eggNOG" id="COG0532">
    <property type="taxonomic scope" value="Bacteria"/>
</dbReference>
<dbReference type="eggNOG" id="COG3266">
    <property type="taxonomic scope" value="Bacteria"/>
</dbReference>
<dbReference type="HOGENOM" id="CLU_006301_5_1_7"/>
<dbReference type="OrthoDB" id="9811804at2"/>
<dbReference type="Proteomes" id="UP000006732">
    <property type="component" value="Chromosome"/>
</dbReference>
<dbReference type="GO" id="GO:0005829">
    <property type="term" value="C:cytosol"/>
    <property type="evidence" value="ECO:0007669"/>
    <property type="project" value="TreeGrafter"/>
</dbReference>
<dbReference type="GO" id="GO:0005525">
    <property type="term" value="F:GTP binding"/>
    <property type="evidence" value="ECO:0007669"/>
    <property type="project" value="UniProtKB-KW"/>
</dbReference>
<dbReference type="GO" id="GO:0003924">
    <property type="term" value="F:GTPase activity"/>
    <property type="evidence" value="ECO:0007669"/>
    <property type="project" value="UniProtKB-UniRule"/>
</dbReference>
<dbReference type="GO" id="GO:0003743">
    <property type="term" value="F:translation initiation factor activity"/>
    <property type="evidence" value="ECO:0007669"/>
    <property type="project" value="UniProtKB-UniRule"/>
</dbReference>
<dbReference type="CDD" id="cd01887">
    <property type="entry name" value="IF2_eIF5B"/>
    <property type="match status" value="1"/>
</dbReference>
<dbReference type="CDD" id="cd03702">
    <property type="entry name" value="IF2_mtIF2_II"/>
    <property type="match status" value="1"/>
</dbReference>
<dbReference type="CDD" id="cd03692">
    <property type="entry name" value="mtIF2_IVc"/>
    <property type="match status" value="1"/>
</dbReference>
<dbReference type="FunFam" id="2.40.30.10:FF:000007">
    <property type="entry name" value="Translation initiation factor IF-2"/>
    <property type="match status" value="1"/>
</dbReference>
<dbReference type="FunFam" id="2.40.30.10:FF:000008">
    <property type="entry name" value="Translation initiation factor IF-2"/>
    <property type="match status" value="1"/>
</dbReference>
<dbReference type="FunFam" id="3.40.50.10050:FF:000001">
    <property type="entry name" value="Translation initiation factor IF-2"/>
    <property type="match status" value="1"/>
</dbReference>
<dbReference type="FunFam" id="3.40.50.300:FF:000019">
    <property type="entry name" value="Translation initiation factor IF-2"/>
    <property type="match status" value="1"/>
</dbReference>
<dbReference type="Gene3D" id="1.10.10.2480">
    <property type="match status" value="1"/>
</dbReference>
<dbReference type="Gene3D" id="3.40.50.300">
    <property type="entry name" value="P-loop containing nucleotide triphosphate hydrolases"/>
    <property type="match status" value="1"/>
</dbReference>
<dbReference type="Gene3D" id="2.40.30.10">
    <property type="entry name" value="Translation factors"/>
    <property type="match status" value="2"/>
</dbReference>
<dbReference type="Gene3D" id="3.40.50.10050">
    <property type="entry name" value="Translation initiation factor IF- 2, domain 3"/>
    <property type="match status" value="1"/>
</dbReference>
<dbReference type="HAMAP" id="MF_00100_B">
    <property type="entry name" value="IF_2_B"/>
    <property type="match status" value="1"/>
</dbReference>
<dbReference type="InterPro" id="IPR053905">
    <property type="entry name" value="EF-G-like_DII"/>
</dbReference>
<dbReference type="InterPro" id="IPR044145">
    <property type="entry name" value="IF2_II"/>
</dbReference>
<dbReference type="InterPro" id="IPR006847">
    <property type="entry name" value="IF2_N"/>
</dbReference>
<dbReference type="InterPro" id="IPR027417">
    <property type="entry name" value="P-loop_NTPase"/>
</dbReference>
<dbReference type="InterPro" id="IPR005225">
    <property type="entry name" value="Small_GTP-bd"/>
</dbReference>
<dbReference type="InterPro" id="IPR000795">
    <property type="entry name" value="T_Tr_GTP-bd_dom"/>
</dbReference>
<dbReference type="InterPro" id="IPR000178">
    <property type="entry name" value="TF_IF2_bacterial-like"/>
</dbReference>
<dbReference type="InterPro" id="IPR015760">
    <property type="entry name" value="TIF_IF2"/>
</dbReference>
<dbReference type="InterPro" id="IPR023115">
    <property type="entry name" value="TIF_IF2_dom3"/>
</dbReference>
<dbReference type="InterPro" id="IPR036925">
    <property type="entry name" value="TIF_IF2_dom3_sf"/>
</dbReference>
<dbReference type="InterPro" id="IPR009000">
    <property type="entry name" value="Transl_B-barrel_sf"/>
</dbReference>
<dbReference type="NCBIfam" id="TIGR00487">
    <property type="entry name" value="IF-2"/>
    <property type="match status" value="1"/>
</dbReference>
<dbReference type="NCBIfam" id="TIGR00231">
    <property type="entry name" value="small_GTP"/>
    <property type="match status" value="1"/>
</dbReference>
<dbReference type="PANTHER" id="PTHR43381:SF5">
    <property type="entry name" value="TR-TYPE G DOMAIN-CONTAINING PROTEIN"/>
    <property type="match status" value="1"/>
</dbReference>
<dbReference type="PANTHER" id="PTHR43381">
    <property type="entry name" value="TRANSLATION INITIATION FACTOR IF-2-RELATED"/>
    <property type="match status" value="1"/>
</dbReference>
<dbReference type="Pfam" id="PF22042">
    <property type="entry name" value="EF-G_D2"/>
    <property type="match status" value="1"/>
</dbReference>
<dbReference type="Pfam" id="PF00009">
    <property type="entry name" value="GTP_EFTU"/>
    <property type="match status" value="1"/>
</dbReference>
<dbReference type="Pfam" id="PF11987">
    <property type="entry name" value="IF-2"/>
    <property type="match status" value="1"/>
</dbReference>
<dbReference type="Pfam" id="PF04760">
    <property type="entry name" value="IF2_N"/>
    <property type="match status" value="2"/>
</dbReference>
<dbReference type="SUPFAM" id="SSF52156">
    <property type="entry name" value="Initiation factor IF2/eIF5b, domain 3"/>
    <property type="match status" value="1"/>
</dbReference>
<dbReference type="SUPFAM" id="SSF52540">
    <property type="entry name" value="P-loop containing nucleoside triphosphate hydrolases"/>
    <property type="match status" value="1"/>
</dbReference>
<dbReference type="SUPFAM" id="SSF50447">
    <property type="entry name" value="Translation proteins"/>
    <property type="match status" value="2"/>
</dbReference>
<dbReference type="PROSITE" id="PS51722">
    <property type="entry name" value="G_TR_2"/>
    <property type="match status" value="1"/>
</dbReference>
<dbReference type="PROSITE" id="PS01176">
    <property type="entry name" value="IF2"/>
    <property type="match status" value="1"/>
</dbReference>
<protein>
    <recommendedName>
        <fullName evidence="2">Translation initiation factor IF-2</fullName>
    </recommendedName>
</protein>
<name>IF2_PELPD</name>
<sequence>MSKIRVSNLAEKLGLEHKEVLARLKEIGVDAKTATSLVDEDVLKKLMPSLSPDGAEEVRVTTTIIRRRAKAAPVVEPAPAAVAESLEEKPAEPVAPAAPTPPEVPAAAPAPPKAAAAPAEAATMNARIIAPPPAPVETAAPVAAAPVAAATAPPEKALPTPPVVEAPVVEAKPEPVVEKPKVPAQPDKPSANQARILGRMEIPGVTTRPTRVVRRDGTVAPAAEHAQRRPSPAAGAPSRGAAPDRSRMKPATLPPSAPPAADDRRKFGGKSAAPHSEGAGKGGKKGGASTAKKKEQPKKHEILEKRERVFDPVYRGSRKKVKERASETRKTEITIPKAIKRIIKISETISVGELAKRMGIKANDLIKSLMKMGMMVTINHALDFETTVILASEYGYEVENMAVDLDEILESTPDAPETLVKRPPVVTIMGHVDHGKTSLLDAIREANVIAGEAGGITQHIGAYDVELNGRKITFLDTPGHEAFTAMRARGAKVTDIVILVVAADDGVMPQTREAINHSKAAGVPIVVAINKIDKPEAKPERVKQELMEFGLVASEWGGDATMVEVSAKKRLNLEGLLEMVLLQADLMELKANPDKEAKGTIVEAKLDRGRGPVATVLVQEGTLKNGDYCVVGVHSGRVRAIHNDRGEKVNEAGPSMPVEVIGLSGVPDAGDVFVSLKDEKQAKEIATLRQIKQREIEMAKHSKVTLEDLYKQIQSGDVKDLNVIVKGDVQGSVEVVSDSFRKLSTDAVRLNVIHSGVGAITETDVNLAAASNTIIIGFNVRPEVKAQAMAEKEGVDIRLYSIIYDAVEDVKKAMEGLLDPTLKEKYLGRAEIREVFSVPKIGNIAGSYVQDGKMLRNAQARLLRDNVVIYEGKLSSLRRIKDDVKEVAAGYECGIGLENYNNIRIGDIIEAFEIEKVATKL</sequence>
<comment type="function">
    <text evidence="2">One of the essential components for the initiation of protein synthesis. Protects formylmethionyl-tRNA from spontaneous hydrolysis and promotes its binding to the 30S ribosomal subunits. Also involved in the hydrolysis of GTP during the formation of the 70S ribosomal complex.</text>
</comment>
<comment type="subcellular location">
    <subcellularLocation>
        <location evidence="2">Cytoplasm</location>
    </subcellularLocation>
</comment>
<comment type="similarity">
    <text evidence="2">Belongs to the TRAFAC class translation factor GTPase superfamily. Classic translation factor GTPase family. IF-2 subfamily.</text>
</comment>
<evidence type="ECO:0000250" key="1"/>
<evidence type="ECO:0000255" key="2">
    <source>
        <dbReference type="HAMAP-Rule" id="MF_00100"/>
    </source>
</evidence>
<evidence type="ECO:0000256" key="3">
    <source>
        <dbReference type="SAM" id="MobiDB-lite"/>
    </source>
</evidence>
<keyword id="KW-0963">Cytoplasm</keyword>
<keyword id="KW-0342">GTP-binding</keyword>
<keyword id="KW-0396">Initiation factor</keyword>
<keyword id="KW-0547">Nucleotide-binding</keyword>
<keyword id="KW-0648">Protein biosynthesis</keyword>
<keyword id="KW-1185">Reference proteome</keyword>
<proteinExistence type="inferred from homology"/>